<dbReference type="EC" id="1.8.1.8" evidence="1"/>
<dbReference type="EMBL" id="AM286415">
    <property type="protein sequence ID" value="CAL10478.1"/>
    <property type="molecule type" value="Genomic_DNA"/>
</dbReference>
<dbReference type="RefSeq" id="WP_011815414.1">
    <property type="nucleotide sequence ID" value="NC_008800.1"/>
</dbReference>
<dbReference type="RefSeq" id="YP_001004724.1">
    <property type="nucleotide sequence ID" value="NC_008800.1"/>
</dbReference>
<dbReference type="SMR" id="A1JIN7"/>
<dbReference type="KEGG" id="yen:YE0348"/>
<dbReference type="PATRIC" id="fig|393305.7.peg.443"/>
<dbReference type="eggNOG" id="COG4232">
    <property type="taxonomic scope" value="Bacteria"/>
</dbReference>
<dbReference type="HOGENOM" id="CLU_014657_3_0_6"/>
<dbReference type="OrthoDB" id="9811036at2"/>
<dbReference type="Proteomes" id="UP000000642">
    <property type="component" value="Chromosome"/>
</dbReference>
<dbReference type="GO" id="GO:0005886">
    <property type="term" value="C:plasma membrane"/>
    <property type="evidence" value="ECO:0007669"/>
    <property type="project" value="UniProtKB-SubCell"/>
</dbReference>
<dbReference type="GO" id="GO:0009055">
    <property type="term" value="F:electron transfer activity"/>
    <property type="evidence" value="ECO:0007669"/>
    <property type="project" value="UniProtKB-UniRule"/>
</dbReference>
<dbReference type="GO" id="GO:0047134">
    <property type="term" value="F:protein-disulfide reductase [NAD(P)H] activity"/>
    <property type="evidence" value="ECO:0007669"/>
    <property type="project" value="UniProtKB-UniRule"/>
</dbReference>
<dbReference type="GO" id="GO:0045454">
    <property type="term" value="P:cell redox homeostasis"/>
    <property type="evidence" value="ECO:0007669"/>
    <property type="project" value="TreeGrafter"/>
</dbReference>
<dbReference type="GO" id="GO:0017004">
    <property type="term" value="P:cytochrome complex assembly"/>
    <property type="evidence" value="ECO:0007669"/>
    <property type="project" value="UniProtKB-UniRule"/>
</dbReference>
<dbReference type="CDD" id="cd02953">
    <property type="entry name" value="DsbDgamma"/>
    <property type="match status" value="1"/>
</dbReference>
<dbReference type="FunFam" id="2.60.40.1250:FF:000001">
    <property type="entry name" value="Thiol:disulfide interchange protein DsbD"/>
    <property type="match status" value="1"/>
</dbReference>
<dbReference type="FunFam" id="3.40.30.10:FF:000116">
    <property type="entry name" value="Thiol:disulfide interchange protein DsbD"/>
    <property type="match status" value="1"/>
</dbReference>
<dbReference type="Gene3D" id="3.40.30.10">
    <property type="entry name" value="Glutaredoxin"/>
    <property type="match status" value="1"/>
</dbReference>
<dbReference type="Gene3D" id="2.60.40.1250">
    <property type="entry name" value="Thiol:disulfide interchange protein DsbD, N-terminal domain"/>
    <property type="match status" value="1"/>
</dbReference>
<dbReference type="HAMAP" id="MF_00399">
    <property type="entry name" value="DbsD"/>
    <property type="match status" value="1"/>
</dbReference>
<dbReference type="InterPro" id="IPR003834">
    <property type="entry name" value="Cyt_c_assmbl_TM_dom"/>
</dbReference>
<dbReference type="InterPro" id="IPR035671">
    <property type="entry name" value="DsbD_gamma"/>
</dbReference>
<dbReference type="InterPro" id="IPR028250">
    <property type="entry name" value="DsbDN"/>
</dbReference>
<dbReference type="InterPro" id="IPR036929">
    <property type="entry name" value="DsbDN_sf"/>
</dbReference>
<dbReference type="InterPro" id="IPR022910">
    <property type="entry name" value="Thiol_diS_interchange_DbsD"/>
</dbReference>
<dbReference type="InterPro" id="IPR036249">
    <property type="entry name" value="Thioredoxin-like_sf"/>
</dbReference>
<dbReference type="InterPro" id="IPR017937">
    <property type="entry name" value="Thioredoxin_CS"/>
</dbReference>
<dbReference type="InterPro" id="IPR013766">
    <property type="entry name" value="Thioredoxin_domain"/>
</dbReference>
<dbReference type="NCBIfam" id="NF001419">
    <property type="entry name" value="PRK00293.1"/>
    <property type="match status" value="1"/>
</dbReference>
<dbReference type="PANTHER" id="PTHR32234">
    <property type="entry name" value="THIOL:DISULFIDE INTERCHANGE PROTEIN DSBD"/>
    <property type="match status" value="1"/>
</dbReference>
<dbReference type="PANTHER" id="PTHR32234:SF0">
    <property type="entry name" value="THIOL:DISULFIDE INTERCHANGE PROTEIN DSBD"/>
    <property type="match status" value="1"/>
</dbReference>
<dbReference type="Pfam" id="PF11412">
    <property type="entry name" value="DsbD_N"/>
    <property type="match status" value="1"/>
</dbReference>
<dbReference type="Pfam" id="PF02683">
    <property type="entry name" value="DsbD_TM"/>
    <property type="match status" value="1"/>
</dbReference>
<dbReference type="Pfam" id="PF13899">
    <property type="entry name" value="Thioredoxin_7"/>
    <property type="match status" value="1"/>
</dbReference>
<dbReference type="SUPFAM" id="SSF74863">
    <property type="entry name" value="Thiol:disulfide interchange protein DsbD, N-terminal domain (DsbD-alpha)"/>
    <property type="match status" value="1"/>
</dbReference>
<dbReference type="SUPFAM" id="SSF52833">
    <property type="entry name" value="Thioredoxin-like"/>
    <property type="match status" value="1"/>
</dbReference>
<dbReference type="PROSITE" id="PS00194">
    <property type="entry name" value="THIOREDOXIN_1"/>
    <property type="match status" value="1"/>
</dbReference>
<dbReference type="PROSITE" id="PS51352">
    <property type="entry name" value="THIOREDOXIN_2"/>
    <property type="match status" value="1"/>
</dbReference>
<accession>A1JIN7</accession>
<comment type="function">
    <text evidence="1">Required to facilitate the formation of correct disulfide bonds in some periplasmic proteins and for the assembly of the periplasmic c-type cytochromes. Acts by transferring electrons from cytoplasmic thioredoxin to the periplasm. This transfer involves a cascade of disulfide bond formation and reduction steps.</text>
</comment>
<comment type="catalytic activity">
    <reaction evidence="1">
        <text>[protein]-dithiol + NAD(+) = [protein]-disulfide + NADH + H(+)</text>
        <dbReference type="Rhea" id="RHEA:18749"/>
        <dbReference type="Rhea" id="RHEA-COMP:10593"/>
        <dbReference type="Rhea" id="RHEA-COMP:10594"/>
        <dbReference type="ChEBI" id="CHEBI:15378"/>
        <dbReference type="ChEBI" id="CHEBI:29950"/>
        <dbReference type="ChEBI" id="CHEBI:50058"/>
        <dbReference type="ChEBI" id="CHEBI:57540"/>
        <dbReference type="ChEBI" id="CHEBI:57945"/>
        <dbReference type="EC" id="1.8.1.8"/>
    </reaction>
</comment>
<comment type="catalytic activity">
    <reaction evidence="1">
        <text>[protein]-dithiol + NADP(+) = [protein]-disulfide + NADPH + H(+)</text>
        <dbReference type="Rhea" id="RHEA:18753"/>
        <dbReference type="Rhea" id="RHEA-COMP:10593"/>
        <dbReference type="Rhea" id="RHEA-COMP:10594"/>
        <dbReference type="ChEBI" id="CHEBI:15378"/>
        <dbReference type="ChEBI" id="CHEBI:29950"/>
        <dbReference type="ChEBI" id="CHEBI:50058"/>
        <dbReference type="ChEBI" id="CHEBI:57783"/>
        <dbReference type="ChEBI" id="CHEBI:58349"/>
        <dbReference type="EC" id="1.8.1.8"/>
    </reaction>
</comment>
<comment type="subcellular location">
    <subcellularLocation>
        <location evidence="1">Cell inner membrane</location>
        <topology evidence="1">Multi-pass membrane protein</topology>
    </subcellularLocation>
</comment>
<comment type="similarity">
    <text evidence="1">Belongs to the thioredoxin family. DsbD subfamily.</text>
</comment>
<feature type="signal peptide" evidence="1">
    <location>
        <begin position="1"/>
        <end position="24"/>
    </location>
</feature>
<feature type="chain" id="PRO_5000200859" description="Thiol:disulfide interchange protein DsbD">
    <location>
        <begin position="25"/>
        <end position="578"/>
    </location>
</feature>
<feature type="transmembrane region" description="Helical" evidence="1">
    <location>
        <begin position="183"/>
        <end position="203"/>
    </location>
</feature>
<feature type="transmembrane region" description="Helical" evidence="1">
    <location>
        <begin position="219"/>
        <end position="239"/>
    </location>
</feature>
<feature type="transmembrane region" description="Helical" evidence="1">
    <location>
        <begin position="256"/>
        <end position="276"/>
    </location>
</feature>
<feature type="transmembrane region" description="Helical" evidence="1">
    <location>
        <begin position="297"/>
        <end position="317"/>
    </location>
</feature>
<feature type="transmembrane region" description="Helical" evidence="1">
    <location>
        <begin position="318"/>
        <end position="338"/>
    </location>
</feature>
<feature type="transmembrane region" description="Helical" evidence="1">
    <location>
        <begin position="339"/>
        <end position="359"/>
    </location>
</feature>
<feature type="transmembrane region" description="Helical" evidence="1">
    <location>
        <begin position="370"/>
        <end position="390"/>
    </location>
</feature>
<feature type="transmembrane region" description="Helical" evidence="1">
    <location>
        <begin position="397"/>
        <end position="417"/>
    </location>
</feature>
<feature type="transmembrane region" description="Helical" evidence="1">
    <location>
        <begin position="421"/>
        <end position="441"/>
    </location>
</feature>
<feature type="domain" description="Thioredoxin" evidence="1">
    <location>
        <begin position="438"/>
        <end position="578"/>
    </location>
</feature>
<feature type="disulfide bond" description="Redox-active" evidence="1">
    <location>
        <begin position="134"/>
        <end position="140"/>
    </location>
</feature>
<feature type="disulfide bond" description="Redox-active" evidence="1">
    <location>
        <begin position="195"/>
        <end position="317"/>
    </location>
</feature>
<feature type="disulfide bond" description="Redox-active" evidence="1">
    <location>
        <begin position="493"/>
        <end position="496"/>
    </location>
</feature>
<name>DSBD_YERE8</name>
<gene>
    <name evidence="1" type="primary">dsbD</name>
    <name type="ordered locus">YE0348</name>
</gene>
<proteinExistence type="inferred from homology"/>
<organism>
    <name type="scientific">Yersinia enterocolitica serotype O:8 / biotype 1B (strain NCTC 13174 / 8081)</name>
    <dbReference type="NCBI Taxonomy" id="393305"/>
    <lineage>
        <taxon>Bacteria</taxon>
        <taxon>Pseudomonadati</taxon>
        <taxon>Pseudomonadota</taxon>
        <taxon>Gammaproteobacteria</taxon>
        <taxon>Enterobacterales</taxon>
        <taxon>Yersiniaceae</taxon>
        <taxon>Yersinia</taxon>
    </lineage>
</organism>
<protein>
    <recommendedName>
        <fullName evidence="1">Thiol:disulfide interchange protein DsbD</fullName>
        <ecNumber evidence="1">1.8.1.8</ecNumber>
    </recommendedName>
    <alternativeName>
        <fullName evidence="1">Protein-disulfide reductase</fullName>
        <shortName evidence="1">Disulfide reductase</shortName>
    </alternativeName>
</protein>
<sequence>MAQRFITLILLLCSILLAPHSAQASLFGDNSSFGQKSSQSRFIPVDQAFAFDFRQQGDQLALSWQIHPDYYLYRQQIKIVPNNATFGAFTLPEGIAHRDEFYGEVAIFKQQLTLKIPITQAGERASVSVTYQGCAEAGFCYPPETRVVPLSAITAGSSAVTAPPIAAPATPAPAELPFSPLWALLIGIGIAFTPCVLPMYPLISAIILGREKPHSQRRILLLAIVYVQGMALTYTLLGLVVAAAGLQFQAALQHPYVLIGLSALFVLLALSMFGLYSLQLPSSLQTRLVQWSSSQRGGSLAGVFAMGALAGLICSPCTTAPLSAILLYIAQSGNMLAGGGTLYLYALGMGIPLVIVTLFGNKLLPRSGPWMQYVKEAFGFVILALPVFLLERVLGDVWGLRLWSLLAIAFFGWAFILSLKAHSGWARAFQLLLLAALLIAARPLQDWAFGSPTQQSEIKHLAFKQVADLPQLQAALAQAKGKPVMLDLYADWCVACKEFEKYTFSDEQVQRQLADTVLLQADVTANSAEHAALLKELNVLGLPTILFFDAPGNEIPAARVTGFMNASGFLQHLQNLPR</sequence>
<evidence type="ECO:0000255" key="1">
    <source>
        <dbReference type="HAMAP-Rule" id="MF_00399"/>
    </source>
</evidence>
<reference key="1">
    <citation type="journal article" date="2006" name="PLoS Genet.">
        <title>The complete genome sequence and comparative genome analysis of the high pathogenicity Yersinia enterocolitica strain 8081.</title>
        <authorList>
            <person name="Thomson N.R."/>
            <person name="Howard S."/>
            <person name="Wren B.W."/>
            <person name="Holden M.T.G."/>
            <person name="Crossman L."/>
            <person name="Challis G.L."/>
            <person name="Churcher C."/>
            <person name="Mungall K."/>
            <person name="Brooks K."/>
            <person name="Chillingworth T."/>
            <person name="Feltwell T."/>
            <person name="Abdellah Z."/>
            <person name="Hauser H."/>
            <person name="Jagels K."/>
            <person name="Maddison M."/>
            <person name="Moule S."/>
            <person name="Sanders M."/>
            <person name="Whitehead S."/>
            <person name="Quail M.A."/>
            <person name="Dougan G."/>
            <person name="Parkhill J."/>
            <person name="Prentice M.B."/>
        </authorList>
    </citation>
    <scope>NUCLEOTIDE SEQUENCE [LARGE SCALE GENOMIC DNA]</scope>
    <source>
        <strain>NCTC 13174 / 8081</strain>
    </source>
</reference>
<keyword id="KW-0997">Cell inner membrane</keyword>
<keyword id="KW-1003">Cell membrane</keyword>
<keyword id="KW-0201">Cytochrome c-type biogenesis</keyword>
<keyword id="KW-1015">Disulfide bond</keyword>
<keyword id="KW-0249">Electron transport</keyword>
<keyword id="KW-0472">Membrane</keyword>
<keyword id="KW-0520">NAD</keyword>
<keyword id="KW-0560">Oxidoreductase</keyword>
<keyword id="KW-0676">Redox-active center</keyword>
<keyword id="KW-0732">Signal</keyword>
<keyword id="KW-0812">Transmembrane</keyword>
<keyword id="KW-1133">Transmembrane helix</keyword>
<keyword id="KW-0813">Transport</keyword>